<reference key="1">
    <citation type="journal article" date="2004" name="Nat. Genet.">
        <title>Complete sequencing and characterization of 21,243 full-length human cDNAs.</title>
        <authorList>
            <person name="Ota T."/>
            <person name="Suzuki Y."/>
            <person name="Nishikawa T."/>
            <person name="Otsuki T."/>
            <person name="Sugiyama T."/>
            <person name="Irie R."/>
            <person name="Wakamatsu A."/>
            <person name="Hayashi K."/>
            <person name="Sato H."/>
            <person name="Nagai K."/>
            <person name="Kimura K."/>
            <person name="Makita H."/>
            <person name="Sekine M."/>
            <person name="Obayashi M."/>
            <person name="Nishi T."/>
            <person name="Shibahara T."/>
            <person name="Tanaka T."/>
            <person name="Ishii S."/>
            <person name="Yamamoto J."/>
            <person name="Saito K."/>
            <person name="Kawai Y."/>
            <person name="Isono Y."/>
            <person name="Nakamura Y."/>
            <person name="Nagahari K."/>
            <person name="Murakami K."/>
            <person name="Yasuda T."/>
            <person name="Iwayanagi T."/>
            <person name="Wagatsuma M."/>
            <person name="Shiratori A."/>
            <person name="Sudo H."/>
            <person name="Hosoiri T."/>
            <person name="Kaku Y."/>
            <person name="Kodaira H."/>
            <person name="Kondo H."/>
            <person name="Sugawara M."/>
            <person name="Takahashi M."/>
            <person name="Kanda K."/>
            <person name="Yokoi T."/>
            <person name="Furuya T."/>
            <person name="Kikkawa E."/>
            <person name="Omura Y."/>
            <person name="Abe K."/>
            <person name="Kamihara K."/>
            <person name="Katsuta N."/>
            <person name="Sato K."/>
            <person name="Tanikawa M."/>
            <person name="Yamazaki M."/>
            <person name="Ninomiya K."/>
            <person name="Ishibashi T."/>
            <person name="Yamashita H."/>
            <person name="Murakawa K."/>
            <person name="Fujimori K."/>
            <person name="Tanai H."/>
            <person name="Kimata M."/>
            <person name="Watanabe M."/>
            <person name="Hiraoka S."/>
            <person name="Chiba Y."/>
            <person name="Ishida S."/>
            <person name="Ono Y."/>
            <person name="Takiguchi S."/>
            <person name="Watanabe S."/>
            <person name="Yosida M."/>
            <person name="Hotuta T."/>
            <person name="Kusano J."/>
            <person name="Kanehori K."/>
            <person name="Takahashi-Fujii A."/>
            <person name="Hara H."/>
            <person name="Tanase T.-O."/>
            <person name="Nomura Y."/>
            <person name="Togiya S."/>
            <person name="Komai F."/>
            <person name="Hara R."/>
            <person name="Takeuchi K."/>
            <person name="Arita M."/>
            <person name="Imose N."/>
            <person name="Musashino K."/>
            <person name="Yuuki H."/>
            <person name="Oshima A."/>
            <person name="Sasaki N."/>
            <person name="Aotsuka S."/>
            <person name="Yoshikawa Y."/>
            <person name="Matsunawa H."/>
            <person name="Ichihara T."/>
            <person name="Shiohata N."/>
            <person name="Sano S."/>
            <person name="Moriya S."/>
            <person name="Momiyama H."/>
            <person name="Satoh N."/>
            <person name="Takami S."/>
            <person name="Terashima Y."/>
            <person name="Suzuki O."/>
            <person name="Nakagawa S."/>
            <person name="Senoh A."/>
            <person name="Mizoguchi H."/>
            <person name="Goto Y."/>
            <person name="Shimizu F."/>
            <person name="Wakebe H."/>
            <person name="Hishigaki H."/>
            <person name="Watanabe T."/>
            <person name="Sugiyama A."/>
            <person name="Takemoto M."/>
            <person name="Kawakami B."/>
            <person name="Yamazaki M."/>
            <person name="Watanabe K."/>
            <person name="Kumagai A."/>
            <person name="Itakura S."/>
            <person name="Fukuzumi Y."/>
            <person name="Fujimori Y."/>
            <person name="Komiyama M."/>
            <person name="Tashiro H."/>
            <person name="Tanigami A."/>
            <person name="Fujiwara T."/>
            <person name="Ono T."/>
            <person name="Yamada K."/>
            <person name="Fujii Y."/>
            <person name="Ozaki K."/>
            <person name="Hirao M."/>
            <person name="Ohmori Y."/>
            <person name="Kawabata A."/>
            <person name="Hikiji T."/>
            <person name="Kobatake N."/>
            <person name="Inagaki H."/>
            <person name="Ikema Y."/>
            <person name="Okamoto S."/>
            <person name="Okitani R."/>
            <person name="Kawakami T."/>
            <person name="Noguchi S."/>
            <person name="Itoh T."/>
            <person name="Shigeta K."/>
            <person name="Senba T."/>
            <person name="Matsumura K."/>
            <person name="Nakajima Y."/>
            <person name="Mizuno T."/>
            <person name="Morinaga M."/>
            <person name="Sasaki M."/>
            <person name="Togashi T."/>
            <person name="Oyama M."/>
            <person name="Hata H."/>
            <person name="Watanabe M."/>
            <person name="Komatsu T."/>
            <person name="Mizushima-Sugano J."/>
            <person name="Satoh T."/>
            <person name="Shirai Y."/>
            <person name="Takahashi Y."/>
            <person name="Nakagawa K."/>
            <person name="Okumura K."/>
            <person name="Nagase T."/>
            <person name="Nomura N."/>
            <person name="Kikuchi H."/>
            <person name="Masuho Y."/>
            <person name="Yamashita R."/>
            <person name="Nakai K."/>
            <person name="Yada T."/>
            <person name="Nakamura Y."/>
            <person name="Ohara O."/>
            <person name="Isogai T."/>
            <person name="Sugano S."/>
        </authorList>
    </citation>
    <scope>NUCLEOTIDE SEQUENCE [LARGE SCALE MRNA] (ISOFORMS 2 AND 3)</scope>
    <source>
        <tissue>Amygdala</tissue>
        <tissue>Cerebellum</tissue>
    </source>
</reference>
<reference key="2">
    <citation type="journal article" date="2006" name="Nature">
        <title>DNA sequence of human chromosome 17 and analysis of rearrangement in the human lineage.</title>
        <authorList>
            <person name="Zody M.C."/>
            <person name="Garber M."/>
            <person name="Adams D.J."/>
            <person name="Sharpe T."/>
            <person name="Harrow J."/>
            <person name="Lupski J.R."/>
            <person name="Nicholson C."/>
            <person name="Searle S.M."/>
            <person name="Wilming L."/>
            <person name="Young S.K."/>
            <person name="Abouelleil A."/>
            <person name="Allen N.R."/>
            <person name="Bi W."/>
            <person name="Bloom T."/>
            <person name="Borowsky M.L."/>
            <person name="Bugalter B.E."/>
            <person name="Butler J."/>
            <person name="Chang J.L."/>
            <person name="Chen C.-K."/>
            <person name="Cook A."/>
            <person name="Corum B."/>
            <person name="Cuomo C.A."/>
            <person name="de Jong P.J."/>
            <person name="DeCaprio D."/>
            <person name="Dewar K."/>
            <person name="FitzGerald M."/>
            <person name="Gilbert J."/>
            <person name="Gibson R."/>
            <person name="Gnerre S."/>
            <person name="Goldstein S."/>
            <person name="Grafham D.V."/>
            <person name="Grocock R."/>
            <person name="Hafez N."/>
            <person name="Hagopian D.S."/>
            <person name="Hart E."/>
            <person name="Norman C.H."/>
            <person name="Humphray S."/>
            <person name="Jaffe D.B."/>
            <person name="Jones M."/>
            <person name="Kamal M."/>
            <person name="Khodiyar V.K."/>
            <person name="LaButti K."/>
            <person name="Laird G."/>
            <person name="Lehoczky J."/>
            <person name="Liu X."/>
            <person name="Lokyitsang T."/>
            <person name="Loveland J."/>
            <person name="Lui A."/>
            <person name="Macdonald P."/>
            <person name="Major J.E."/>
            <person name="Matthews L."/>
            <person name="Mauceli E."/>
            <person name="McCarroll S.A."/>
            <person name="Mihalev A.H."/>
            <person name="Mudge J."/>
            <person name="Nguyen C."/>
            <person name="Nicol R."/>
            <person name="O'Leary S.B."/>
            <person name="Osoegawa K."/>
            <person name="Schwartz D.C."/>
            <person name="Shaw-Smith C."/>
            <person name="Stankiewicz P."/>
            <person name="Steward C."/>
            <person name="Swarbreck D."/>
            <person name="Venkataraman V."/>
            <person name="Whittaker C.A."/>
            <person name="Yang X."/>
            <person name="Zimmer A.R."/>
            <person name="Bradley A."/>
            <person name="Hubbard T."/>
            <person name="Birren B.W."/>
            <person name="Rogers J."/>
            <person name="Lander E.S."/>
            <person name="Nusbaum C."/>
        </authorList>
    </citation>
    <scope>NUCLEOTIDE SEQUENCE [LARGE SCALE GENOMIC DNA]</scope>
</reference>
<reference key="3">
    <citation type="journal article" date="2004" name="Genome Res.">
        <title>The status, quality, and expansion of the NIH full-length cDNA project: the Mammalian Gene Collection (MGC).</title>
        <authorList>
            <consortium name="The MGC Project Team"/>
        </authorList>
    </citation>
    <scope>NUCLEOTIDE SEQUENCE [LARGE SCALE MRNA] (ISOFORM 2)</scope>
    <source>
        <tissue>Brain</tissue>
    </source>
</reference>
<reference key="4">
    <citation type="journal article" date="2002" name="Science">
        <title>The protein kinase complement of the human genome.</title>
        <authorList>
            <person name="Manning G."/>
            <person name="Whyte D.B."/>
            <person name="Martinez R."/>
            <person name="Hunter T."/>
            <person name="Sudarsanam S."/>
        </authorList>
    </citation>
    <scope>IDENTIFICATION</scope>
</reference>
<proteinExistence type="evidence at protein level"/>
<name>KS6R_HUMAN</name>
<protein>
    <recommendedName>
        <fullName evidence="5">Ribosomal protein S6 kinase-related protein</fullName>
        <ecNumber evidence="1">2.7.11.1</ecNumber>
    </recommendedName>
    <alternativeName>
        <fullName>Sugen kinase 494</fullName>
    </alternativeName>
</protein>
<sequence>MGAVSCRQGQHTQQGEHTRVAVPHKQGGNIRGPWARGWKSLWTGLGTIRSDLEELWELRGHHYLHQESLKPAPVLVEKPLPEWPVPQFINLFLPEFPIRPIRGQQQLKILGLVAKGSFGTVLKVLDCTQKAVFAVKVVPKVKVLQRDTVRQCKEEVSIQRQINHPFVHSLGDSWQGKRHLFIMCSYCSTDLYSLWSAVGCFPEASIRLFAAELVLVLCYLHDLGIMHRDVKMENILLDERGHLKLTDFGLSRHVPQGAQAYTICGTLQYMAPEVLSGGPYNHAADWWSLGVLLFSLATGKFPVAAERDHVAMLASVTHSDSEIPASLNQGLSLLLHELLCQNPLHRLRYLHHFQVHPFFRGVAFDPELLQKQPVNFVTETQATQPSSAETMPFDDFDCDLESFLLYPIPA</sequence>
<evidence type="ECO:0000255" key="1">
    <source>
        <dbReference type="PROSITE-ProRule" id="PRU00159"/>
    </source>
</evidence>
<evidence type="ECO:0000255" key="2">
    <source>
        <dbReference type="PROSITE-ProRule" id="PRU10027"/>
    </source>
</evidence>
<evidence type="ECO:0000303" key="3">
    <source>
    </source>
</evidence>
<evidence type="ECO:0000303" key="4">
    <source>
    </source>
</evidence>
<evidence type="ECO:0000305" key="5"/>
<evidence type="ECO:0000312" key="6">
    <source>
        <dbReference type="HGNC" id="HGNC:26314"/>
    </source>
</evidence>
<gene>
    <name evidence="6" type="primary">RSKR</name>
    <name type="synonym">SGK494</name>
</gene>
<feature type="chain" id="PRO_0000250646" description="Ribosomal protein S6 kinase-related protein">
    <location>
        <begin position="1"/>
        <end position="410"/>
    </location>
</feature>
<feature type="domain" description="Protein kinase" evidence="1">
    <location>
        <begin position="107"/>
        <end position="274"/>
    </location>
</feature>
<feature type="active site" description="Proton acceptor" evidence="1 2">
    <location>
        <position position="229"/>
    </location>
</feature>
<feature type="binding site" evidence="1">
    <location>
        <begin position="113"/>
        <end position="121"/>
    </location>
    <ligand>
        <name>ATP</name>
        <dbReference type="ChEBI" id="CHEBI:30616"/>
    </ligand>
</feature>
<feature type="binding site" evidence="1">
    <location>
        <position position="136"/>
    </location>
    <ligand>
        <name>ATP</name>
        <dbReference type="ChEBI" id="CHEBI:30616"/>
    </ligand>
</feature>
<feature type="splice variant" id="VSP_020678" description="In isoform 2." evidence="3 4">
    <original>RQINHPFVHSLG</original>
    <variation>VISMTWASCIEM</variation>
    <location>
        <begin position="160"/>
        <end position="171"/>
    </location>
</feature>
<feature type="splice variant" id="VSP_020679" description="In isoform 2." evidence="3 4">
    <location>
        <begin position="172"/>
        <end position="410"/>
    </location>
</feature>
<feature type="splice variant" id="VSP_059421" description="In isoform 3." evidence="3">
    <original>APEV</original>
    <variation>GERG</variation>
    <location>
        <begin position="271"/>
        <end position="274"/>
    </location>
</feature>
<feature type="splice variant" id="VSP_059422" description="In isoform 3." evidence="3">
    <location>
        <begin position="275"/>
        <end position="410"/>
    </location>
</feature>
<comment type="catalytic activity">
    <reaction>
        <text>L-seryl-[protein] + ATP = O-phospho-L-seryl-[protein] + ADP + H(+)</text>
        <dbReference type="Rhea" id="RHEA:17989"/>
        <dbReference type="Rhea" id="RHEA-COMP:9863"/>
        <dbReference type="Rhea" id="RHEA-COMP:11604"/>
        <dbReference type="ChEBI" id="CHEBI:15378"/>
        <dbReference type="ChEBI" id="CHEBI:29999"/>
        <dbReference type="ChEBI" id="CHEBI:30616"/>
        <dbReference type="ChEBI" id="CHEBI:83421"/>
        <dbReference type="ChEBI" id="CHEBI:456216"/>
        <dbReference type="EC" id="2.7.11.1"/>
    </reaction>
</comment>
<comment type="catalytic activity">
    <reaction>
        <text>L-threonyl-[protein] + ATP = O-phospho-L-threonyl-[protein] + ADP + H(+)</text>
        <dbReference type="Rhea" id="RHEA:46608"/>
        <dbReference type="Rhea" id="RHEA-COMP:11060"/>
        <dbReference type="Rhea" id="RHEA-COMP:11605"/>
        <dbReference type="ChEBI" id="CHEBI:15378"/>
        <dbReference type="ChEBI" id="CHEBI:30013"/>
        <dbReference type="ChEBI" id="CHEBI:30616"/>
        <dbReference type="ChEBI" id="CHEBI:61977"/>
        <dbReference type="ChEBI" id="CHEBI:456216"/>
        <dbReference type="EC" id="2.7.11.1"/>
    </reaction>
</comment>
<comment type="interaction">
    <interactant intactId="EBI-1054572">
        <id>Q96LW2</id>
    </interactant>
    <interactant intactId="EBI-3921347">
        <id>P51687</id>
        <label>SUOX</label>
    </interactant>
    <organismsDiffer>false</organismsDiffer>
    <experiments>3</experiments>
</comment>
<comment type="interaction">
    <interactant intactId="EBI-1054572">
        <id>Q96LW2</id>
    </interactant>
    <interactant intactId="EBI-3939165">
        <id>O43711</id>
        <label>TLX3</label>
    </interactant>
    <organismsDiffer>false</organismsDiffer>
    <experiments>3</experiments>
</comment>
<comment type="interaction">
    <interactant intactId="EBI-1054572">
        <id>Q96LW2</id>
    </interactant>
    <interactant intactId="EBI-2819919">
        <id>Q8WVT3</id>
        <label>TRAPPC12</label>
    </interactant>
    <organismsDiffer>false</organismsDiffer>
    <experiments>3</experiments>
</comment>
<comment type="interaction">
    <interactant intactId="EBI-1054572">
        <id>Q96LW2</id>
    </interactant>
    <interactant intactId="EBI-2107455">
        <id>Q08AM6</id>
        <label>VAC14</label>
    </interactant>
    <organismsDiffer>false</organismsDiffer>
    <experiments>3</experiments>
</comment>
<comment type="interaction">
    <interactant intactId="EBI-1054572">
        <id>Q96LW2</id>
    </interactant>
    <interactant intactId="EBI-10191303">
        <id>O95231</id>
        <label>VENTX</label>
    </interactant>
    <organismsDiffer>false</organismsDiffer>
    <experiments>3</experiments>
</comment>
<comment type="interaction">
    <interactant intactId="EBI-1054572">
        <id>Q96LW2</id>
    </interactant>
    <interactant intactId="EBI-745520">
        <id>Q9P0T4</id>
        <label>ZNF581</label>
    </interactant>
    <organismsDiffer>false</organismsDiffer>
    <experiments>3</experiments>
</comment>
<comment type="alternative products">
    <event type="alternative splicing"/>
    <isoform>
        <id>Q96LW2-1</id>
        <name>1</name>
        <sequence type="displayed"/>
    </isoform>
    <isoform>
        <id>Q96LW2-2</id>
        <name>2</name>
        <sequence type="described" ref="VSP_020678 VSP_020679"/>
    </isoform>
    <isoform>
        <id>Q96LW2-3</id>
        <name>3</name>
        <sequence type="described" ref="VSP_059421 VSP_059422"/>
    </isoform>
</comment>
<comment type="miscellaneous">
    <molecule>Isoform 3</molecule>
    <text evidence="5">May be due to an intron retention.</text>
</comment>
<comment type="similarity">
    <text evidence="1">Belongs to the protein kinase superfamily. Ser/Thr protein kinase family.</text>
</comment>
<dbReference type="EC" id="2.7.11.1" evidence="1"/>
<dbReference type="EMBL" id="AK057735">
    <property type="protein sequence ID" value="BAB71555.1"/>
    <property type="molecule type" value="mRNA"/>
</dbReference>
<dbReference type="EMBL" id="AK294189">
    <property type="protein sequence ID" value="BAG57505.1"/>
    <property type="molecule type" value="mRNA"/>
</dbReference>
<dbReference type="EMBL" id="AC005726">
    <property type="status" value="NOT_ANNOTATED_CDS"/>
    <property type="molecule type" value="Genomic_DNA"/>
</dbReference>
<dbReference type="EMBL" id="AC015917">
    <property type="status" value="NOT_ANNOTATED_CDS"/>
    <property type="molecule type" value="Genomic_DNA"/>
</dbReference>
<dbReference type="EMBL" id="BC045622">
    <property type="protein sequence ID" value="AAH45622.1"/>
    <property type="molecule type" value="mRNA"/>
</dbReference>
<dbReference type="RefSeq" id="NP_001167574.1">
    <property type="nucleotide sequence ID" value="NM_001174103.2"/>
</dbReference>
<dbReference type="SMR" id="Q96LW2"/>
<dbReference type="FunCoup" id="Q96LW2">
    <property type="interactions" value="543"/>
</dbReference>
<dbReference type="IntAct" id="Q96LW2">
    <property type="interactions" value="7"/>
</dbReference>
<dbReference type="STRING" id="9606.ENSP00000301037"/>
<dbReference type="iPTMnet" id="Q96LW2"/>
<dbReference type="PhosphoSitePlus" id="Q96LW2"/>
<dbReference type="BioMuta" id="ENSG00000167524"/>
<dbReference type="BioMuta" id="SGK494"/>
<dbReference type="DMDM" id="74724242"/>
<dbReference type="jPOST" id="Q96LW2"/>
<dbReference type="MassIVE" id="Q96LW2"/>
<dbReference type="PaxDb" id="9606-ENSP00000301037"/>
<dbReference type="PeptideAtlas" id="Q96LW2"/>
<dbReference type="Antibodypedia" id="26388">
    <property type="antibodies" value="54 antibodies from 13 providers"/>
</dbReference>
<dbReference type="DNASU" id="124923"/>
<dbReference type="Ensembl" id="ENST00000481916.6">
    <molecule id="Q96LW2-2"/>
    <property type="protein sequence ID" value="ENSP00000436369.2"/>
    <property type="gene ID" value="ENSG00000167524.17"/>
</dbReference>
<dbReference type="Ensembl" id="ENST00000584196.1">
    <molecule id="Q96LW2-2"/>
    <property type="protein sequence ID" value="ENSP00000464466.1"/>
    <property type="gene ID" value="ENSG00000167524.17"/>
</dbReference>
<dbReference type="GeneID" id="124923"/>
<dbReference type="KEGG" id="hsa:124923"/>
<dbReference type="MANE-Select" id="ENST00000301037.11">
    <property type="protein sequence ID" value="ENSP00000301037.5"/>
    <property type="RefSeq nucleotide sequence ID" value="NM_001174103.2"/>
    <property type="RefSeq protein sequence ID" value="NP_001167574.1"/>
</dbReference>
<dbReference type="UCSC" id="uc010crq.4">
    <property type="organism name" value="human"/>
</dbReference>
<dbReference type="AGR" id="HGNC:26314"/>
<dbReference type="CTD" id="124923"/>
<dbReference type="DisGeNET" id="124923"/>
<dbReference type="GeneCards" id="RSKR"/>
<dbReference type="HGNC" id="HGNC:26314">
    <property type="gene designation" value="RSKR"/>
</dbReference>
<dbReference type="neXtProt" id="NX_Q96LW2"/>
<dbReference type="OpenTargets" id="ENSG00000167524"/>
<dbReference type="VEuPathDB" id="HostDB:ENSG00000167524"/>
<dbReference type="eggNOG" id="KOG0605">
    <property type="taxonomic scope" value="Eukaryota"/>
</dbReference>
<dbReference type="eggNOG" id="KOG0694">
    <property type="taxonomic scope" value="Eukaryota"/>
</dbReference>
<dbReference type="GeneTree" id="ENSGT00940000160082"/>
<dbReference type="InParanoid" id="Q96LW2"/>
<dbReference type="OMA" id="YCASAIH"/>
<dbReference type="OrthoDB" id="3205605at2759"/>
<dbReference type="PAN-GO" id="Q96LW2">
    <property type="GO annotations" value="2 GO annotations based on evolutionary models"/>
</dbReference>
<dbReference type="PhylomeDB" id="Q96LW2"/>
<dbReference type="PathwayCommons" id="Q96LW2"/>
<dbReference type="SignaLink" id="Q96LW2"/>
<dbReference type="BioGRID-ORCS" id="124923">
    <property type="hits" value="9 hits in 285 CRISPR screens"/>
</dbReference>
<dbReference type="GenomeRNAi" id="124923"/>
<dbReference type="Pharos" id="Q96LW2">
    <property type="development level" value="Tdark"/>
</dbReference>
<dbReference type="PRO" id="PR:Q96LW2"/>
<dbReference type="Proteomes" id="UP000005640">
    <property type="component" value="Chromosome 17"/>
</dbReference>
<dbReference type="RNAct" id="Q96LW2">
    <property type="molecule type" value="protein"/>
</dbReference>
<dbReference type="Bgee" id="ENSG00000167524">
    <property type="expression patterns" value="Expressed in right hemisphere of cerebellum and 168 other cell types or tissues"/>
</dbReference>
<dbReference type="ExpressionAtlas" id="Q96LW2">
    <property type="expression patterns" value="baseline and differential"/>
</dbReference>
<dbReference type="GO" id="GO:0005524">
    <property type="term" value="F:ATP binding"/>
    <property type="evidence" value="ECO:0007669"/>
    <property type="project" value="UniProtKB-KW"/>
</dbReference>
<dbReference type="GO" id="GO:0004672">
    <property type="term" value="F:protein kinase activity"/>
    <property type="evidence" value="ECO:0000318"/>
    <property type="project" value="GO_Central"/>
</dbReference>
<dbReference type="GO" id="GO:0106310">
    <property type="term" value="F:protein serine kinase activity"/>
    <property type="evidence" value="ECO:0007669"/>
    <property type="project" value="RHEA"/>
</dbReference>
<dbReference type="GO" id="GO:0004674">
    <property type="term" value="F:protein serine/threonine kinase activity"/>
    <property type="evidence" value="ECO:0007669"/>
    <property type="project" value="UniProtKB-KW"/>
</dbReference>
<dbReference type="CDD" id="cd05123">
    <property type="entry name" value="STKc_AGC"/>
    <property type="match status" value="1"/>
</dbReference>
<dbReference type="Gene3D" id="3.30.200.20">
    <property type="entry name" value="Phosphorylase Kinase, domain 1"/>
    <property type="match status" value="1"/>
</dbReference>
<dbReference type="Gene3D" id="1.10.510.10">
    <property type="entry name" value="Transferase(Phosphotransferase) domain 1"/>
    <property type="match status" value="1"/>
</dbReference>
<dbReference type="InterPro" id="IPR011009">
    <property type="entry name" value="Kinase-like_dom_sf"/>
</dbReference>
<dbReference type="InterPro" id="IPR000719">
    <property type="entry name" value="Prot_kinase_dom"/>
</dbReference>
<dbReference type="InterPro" id="IPR008271">
    <property type="entry name" value="Ser/Thr_kinase_AS"/>
</dbReference>
<dbReference type="InterPro" id="IPR045270">
    <property type="entry name" value="STKc_AGC"/>
</dbReference>
<dbReference type="PANTHER" id="PTHR24355">
    <property type="entry name" value="G PROTEIN-COUPLED RECEPTOR KINASE/RIBOSOMAL PROTEIN S6 KINASE"/>
    <property type="match status" value="1"/>
</dbReference>
<dbReference type="PANTHER" id="PTHR24355:SF1">
    <property type="entry name" value="RIBOSOMAL PROTEIN S6 KINASE-RELATED PROTEIN"/>
    <property type="match status" value="1"/>
</dbReference>
<dbReference type="Pfam" id="PF00069">
    <property type="entry name" value="Pkinase"/>
    <property type="match status" value="1"/>
</dbReference>
<dbReference type="SMART" id="SM00220">
    <property type="entry name" value="S_TKc"/>
    <property type="match status" value="1"/>
</dbReference>
<dbReference type="SUPFAM" id="SSF56112">
    <property type="entry name" value="Protein kinase-like (PK-like)"/>
    <property type="match status" value="1"/>
</dbReference>
<dbReference type="PROSITE" id="PS50011">
    <property type="entry name" value="PROTEIN_KINASE_DOM"/>
    <property type="match status" value="1"/>
</dbReference>
<dbReference type="PROSITE" id="PS00108">
    <property type="entry name" value="PROTEIN_KINASE_ST"/>
    <property type="match status" value="1"/>
</dbReference>
<keyword id="KW-0025">Alternative splicing</keyword>
<keyword id="KW-0067">ATP-binding</keyword>
<keyword id="KW-0418">Kinase</keyword>
<keyword id="KW-0547">Nucleotide-binding</keyword>
<keyword id="KW-1185">Reference proteome</keyword>
<keyword id="KW-0723">Serine/threonine-protein kinase</keyword>
<keyword id="KW-0808">Transferase</keyword>
<organism>
    <name type="scientific">Homo sapiens</name>
    <name type="common">Human</name>
    <dbReference type="NCBI Taxonomy" id="9606"/>
    <lineage>
        <taxon>Eukaryota</taxon>
        <taxon>Metazoa</taxon>
        <taxon>Chordata</taxon>
        <taxon>Craniata</taxon>
        <taxon>Vertebrata</taxon>
        <taxon>Euteleostomi</taxon>
        <taxon>Mammalia</taxon>
        <taxon>Eutheria</taxon>
        <taxon>Euarchontoglires</taxon>
        <taxon>Primates</taxon>
        <taxon>Haplorrhini</taxon>
        <taxon>Catarrhini</taxon>
        <taxon>Hominidae</taxon>
        <taxon>Homo</taxon>
    </lineage>
</organism>
<accession>Q96LW2</accession>
<accession>A0A5H1ZRP1</accession>
<accession>B4DFP4</accession>
<accession>L7N484</accession>
<accession>Q49A48</accession>